<keyword id="KW-1185">Reference proteome</keyword>
<reference key="1">
    <citation type="journal article" date="2006" name="Nat. Biotechnol.">
        <title>Genome sequence of the bioplastic-producing 'Knallgas' bacterium Ralstonia eutropha H16.</title>
        <authorList>
            <person name="Pohlmann A."/>
            <person name="Fricke W.F."/>
            <person name="Reinecke F."/>
            <person name="Kusian B."/>
            <person name="Liesegang H."/>
            <person name="Cramm R."/>
            <person name="Eitinger T."/>
            <person name="Ewering C."/>
            <person name="Poetter M."/>
            <person name="Schwartz E."/>
            <person name="Strittmatter A."/>
            <person name="Voss I."/>
            <person name="Gottschalk G."/>
            <person name="Steinbuechel A."/>
            <person name="Friedrich B."/>
            <person name="Bowien B."/>
        </authorList>
    </citation>
    <scope>NUCLEOTIDE SEQUENCE [LARGE SCALE GENOMIC DNA]</scope>
    <source>
        <strain>ATCC 17699 / DSM 428 / KCTC 22496 / NCIMB 10442 / H16 / Stanier 337</strain>
    </source>
</reference>
<gene>
    <name type="ordered locus">H16_B0290</name>
</gene>
<dbReference type="EMBL" id="AM260480">
    <property type="protein sequence ID" value="CAJ95090.1"/>
    <property type="molecule type" value="Genomic_DNA"/>
</dbReference>
<dbReference type="RefSeq" id="WP_011616468.1">
    <property type="nucleotide sequence ID" value="NC_008314.1"/>
</dbReference>
<dbReference type="STRING" id="381666.H16_B0290"/>
<dbReference type="KEGG" id="reh:H16_B0290"/>
<dbReference type="eggNOG" id="COG1671">
    <property type="taxonomic scope" value="Bacteria"/>
</dbReference>
<dbReference type="HOGENOM" id="CLU_106619_2_1_4"/>
<dbReference type="OrthoDB" id="9798918at2"/>
<dbReference type="Proteomes" id="UP000008210">
    <property type="component" value="Chromosome 2"/>
</dbReference>
<dbReference type="CDD" id="cd18720">
    <property type="entry name" value="PIN_YqxD-like"/>
    <property type="match status" value="1"/>
</dbReference>
<dbReference type="HAMAP" id="MF_00489">
    <property type="entry name" value="UPF0178"/>
    <property type="match status" value="1"/>
</dbReference>
<dbReference type="InterPro" id="IPR003791">
    <property type="entry name" value="UPF0178"/>
</dbReference>
<dbReference type="NCBIfam" id="NF001095">
    <property type="entry name" value="PRK00124.1"/>
    <property type="match status" value="1"/>
</dbReference>
<dbReference type="PANTHER" id="PTHR35146">
    <property type="entry name" value="UPF0178 PROTEIN YAII"/>
    <property type="match status" value="1"/>
</dbReference>
<dbReference type="PANTHER" id="PTHR35146:SF1">
    <property type="entry name" value="UPF0178 PROTEIN YAII"/>
    <property type="match status" value="1"/>
</dbReference>
<dbReference type="Pfam" id="PF02639">
    <property type="entry name" value="DUF188"/>
    <property type="match status" value="1"/>
</dbReference>
<sequence>MQVLVDADACPVVVKEMLYRAAQRVEVCVTLVANQYMRTPPSRFIKSLQVPAGFDVADDRIVELVSSGDLVITADIVLAAAALDKGAYVLDPRGSWFSRENIQERLTMREVMEQLRSSGVDTGGPAAYAQQDSKAFAGQLDRFLARHAPPGAVA</sequence>
<organism>
    <name type="scientific">Cupriavidus necator (strain ATCC 17699 / DSM 428 / KCTC 22496 / NCIMB 10442 / H16 / Stanier 337)</name>
    <name type="common">Ralstonia eutropha</name>
    <dbReference type="NCBI Taxonomy" id="381666"/>
    <lineage>
        <taxon>Bacteria</taxon>
        <taxon>Pseudomonadati</taxon>
        <taxon>Pseudomonadota</taxon>
        <taxon>Betaproteobacteria</taxon>
        <taxon>Burkholderiales</taxon>
        <taxon>Burkholderiaceae</taxon>
        <taxon>Cupriavidus</taxon>
    </lineage>
</organism>
<feature type="chain" id="PRO_1000014436" description="UPF0178 protein H16_B0290">
    <location>
        <begin position="1"/>
        <end position="154"/>
    </location>
</feature>
<evidence type="ECO:0000255" key="1">
    <source>
        <dbReference type="HAMAP-Rule" id="MF_00489"/>
    </source>
</evidence>
<accession>Q0K4I4</accession>
<proteinExistence type="inferred from homology"/>
<name>Y4290_CUPNH</name>
<protein>
    <recommendedName>
        <fullName evidence="1">UPF0178 protein H16_B0290</fullName>
    </recommendedName>
</protein>
<comment type="similarity">
    <text evidence="1">Belongs to the UPF0178 family.</text>
</comment>